<accession>Q3AKU3</accession>
<feature type="chain" id="PRO_1000049188" description="Homoserine kinase">
    <location>
        <begin position="1"/>
        <end position="315"/>
    </location>
</feature>
<feature type="binding site" evidence="1">
    <location>
        <begin position="97"/>
        <end position="107"/>
    </location>
    <ligand>
        <name>ATP</name>
        <dbReference type="ChEBI" id="CHEBI:30616"/>
    </ligand>
</feature>
<reference key="1">
    <citation type="submission" date="2005-07" db="EMBL/GenBank/DDBJ databases">
        <title>Complete sequence of Synechococcus sp. CC9605.</title>
        <authorList>
            <consortium name="US DOE Joint Genome Institute"/>
            <person name="Copeland A."/>
            <person name="Lucas S."/>
            <person name="Lapidus A."/>
            <person name="Barry K."/>
            <person name="Detter J.C."/>
            <person name="Glavina T."/>
            <person name="Hammon N."/>
            <person name="Israni S."/>
            <person name="Pitluck S."/>
            <person name="Schmutz J."/>
            <person name="Martinez M."/>
            <person name="Larimer F."/>
            <person name="Land M."/>
            <person name="Kyrpides N."/>
            <person name="Ivanova N."/>
            <person name="Richardson P."/>
        </authorList>
    </citation>
    <scope>NUCLEOTIDE SEQUENCE [LARGE SCALE GENOMIC DNA]</scope>
    <source>
        <strain>CC9605</strain>
    </source>
</reference>
<dbReference type="EC" id="2.7.1.39" evidence="1"/>
<dbReference type="EMBL" id="CP000110">
    <property type="protein sequence ID" value="ABB34789.1"/>
    <property type="molecule type" value="Genomic_DNA"/>
</dbReference>
<dbReference type="RefSeq" id="WP_011364013.1">
    <property type="nucleotide sequence ID" value="NC_007516.1"/>
</dbReference>
<dbReference type="SMR" id="Q3AKU3"/>
<dbReference type="STRING" id="110662.Syncc9605_1031"/>
<dbReference type="KEGG" id="syd:Syncc9605_1031"/>
<dbReference type="eggNOG" id="COG0083">
    <property type="taxonomic scope" value="Bacteria"/>
</dbReference>
<dbReference type="HOGENOM" id="CLU_041243_0_2_3"/>
<dbReference type="OrthoDB" id="9769912at2"/>
<dbReference type="UniPathway" id="UPA00050">
    <property type="reaction ID" value="UER00064"/>
</dbReference>
<dbReference type="GO" id="GO:0005737">
    <property type="term" value="C:cytoplasm"/>
    <property type="evidence" value="ECO:0007669"/>
    <property type="project" value="UniProtKB-SubCell"/>
</dbReference>
<dbReference type="GO" id="GO:0005524">
    <property type="term" value="F:ATP binding"/>
    <property type="evidence" value="ECO:0007669"/>
    <property type="project" value="UniProtKB-UniRule"/>
</dbReference>
<dbReference type="GO" id="GO:0004413">
    <property type="term" value="F:homoserine kinase activity"/>
    <property type="evidence" value="ECO:0007669"/>
    <property type="project" value="UniProtKB-UniRule"/>
</dbReference>
<dbReference type="GO" id="GO:0009088">
    <property type="term" value="P:threonine biosynthetic process"/>
    <property type="evidence" value="ECO:0007669"/>
    <property type="project" value="UniProtKB-UniRule"/>
</dbReference>
<dbReference type="Gene3D" id="3.30.230.10">
    <property type="match status" value="1"/>
</dbReference>
<dbReference type="Gene3D" id="3.30.70.890">
    <property type="entry name" value="GHMP kinase, C-terminal domain"/>
    <property type="match status" value="1"/>
</dbReference>
<dbReference type="HAMAP" id="MF_00384">
    <property type="entry name" value="Homoser_kinase"/>
    <property type="match status" value="1"/>
</dbReference>
<dbReference type="InterPro" id="IPR013750">
    <property type="entry name" value="GHMP_kinase_C_dom"/>
</dbReference>
<dbReference type="InterPro" id="IPR036554">
    <property type="entry name" value="GHMP_kinase_C_sf"/>
</dbReference>
<dbReference type="InterPro" id="IPR006204">
    <property type="entry name" value="GHMP_kinase_N_dom"/>
</dbReference>
<dbReference type="InterPro" id="IPR006203">
    <property type="entry name" value="GHMP_knse_ATP-bd_CS"/>
</dbReference>
<dbReference type="InterPro" id="IPR000870">
    <property type="entry name" value="Homoserine_kinase"/>
</dbReference>
<dbReference type="InterPro" id="IPR020568">
    <property type="entry name" value="Ribosomal_Su5_D2-typ_SF"/>
</dbReference>
<dbReference type="InterPro" id="IPR014721">
    <property type="entry name" value="Ribsml_uS5_D2-typ_fold_subgr"/>
</dbReference>
<dbReference type="NCBIfam" id="NF002288">
    <property type="entry name" value="PRK01212.1-4"/>
    <property type="match status" value="1"/>
</dbReference>
<dbReference type="NCBIfam" id="TIGR00191">
    <property type="entry name" value="thrB"/>
    <property type="match status" value="1"/>
</dbReference>
<dbReference type="PANTHER" id="PTHR20861:SF1">
    <property type="entry name" value="HOMOSERINE KINASE"/>
    <property type="match status" value="1"/>
</dbReference>
<dbReference type="PANTHER" id="PTHR20861">
    <property type="entry name" value="HOMOSERINE/4-DIPHOSPHOCYTIDYL-2-C-METHYL-D-ERYTHRITOL KINASE"/>
    <property type="match status" value="1"/>
</dbReference>
<dbReference type="Pfam" id="PF08544">
    <property type="entry name" value="GHMP_kinases_C"/>
    <property type="match status" value="1"/>
</dbReference>
<dbReference type="Pfam" id="PF00288">
    <property type="entry name" value="GHMP_kinases_N"/>
    <property type="match status" value="1"/>
</dbReference>
<dbReference type="PIRSF" id="PIRSF000676">
    <property type="entry name" value="Homoser_kin"/>
    <property type="match status" value="1"/>
</dbReference>
<dbReference type="PRINTS" id="PR00958">
    <property type="entry name" value="HOMSERKINASE"/>
</dbReference>
<dbReference type="SUPFAM" id="SSF55060">
    <property type="entry name" value="GHMP Kinase, C-terminal domain"/>
    <property type="match status" value="1"/>
</dbReference>
<dbReference type="SUPFAM" id="SSF54211">
    <property type="entry name" value="Ribosomal protein S5 domain 2-like"/>
    <property type="match status" value="1"/>
</dbReference>
<dbReference type="PROSITE" id="PS00627">
    <property type="entry name" value="GHMP_KINASES_ATP"/>
    <property type="match status" value="1"/>
</dbReference>
<name>KHSE_SYNSC</name>
<sequence length="315" mass="33158">MAQPRIGQKVVVDVPATTANLGPGFDCLGAALDLNNRFAMRRIEGGGERFELIIEGSEGSHLRGGPENLVYRAAQRVWKAAGLEPVALEARVRLAVPPARGLGSSATAIVAGLMGANALVGEPLSKEKLLELAIDIEGHPDNVVPSLLGGLCMTAKAASQRWRVVRCEWTPSVKAVVAIPSIRLSTSEARRAMPKAIPVSDAVVNLGALTLLLQGLRTGNGDLISDGMHDRLHEPYRWRLIKGGDQVKQAAMEAGAWGCAISGAGPSVLALCEEDKGPAVSRAMVKAWEAAGVASRAPVLNLQTSGSHWQPAEDE</sequence>
<protein>
    <recommendedName>
        <fullName evidence="1">Homoserine kinase</fullName>
        <shortName evidence="1">HK</shortName>
        <shortName evidence="1">HSK</shortName>
        <ecNumber evidence="1">2.7.1.39</ecNumber>
    </recommendedName>
</protein>
<evidence type="ECO:0000255" key="1">
    <source>
        <dbReference type="HAMAP-Rule" id="MF_00384"/>
    </source>
</evidence>
<gene>
    <name evidence="1" type="primary">thrB</name>
    <name type="ordered locus">Syncc9605_1031</name>
</gene>
<organism>
    <name type="scientific">Synechococcus sp. (strain CC9605)</name>
    <dbReference type="NCBI Taxonomy" id="110662"/>
    <lineage>
        <taxon>Bacteria</taxon>
        <taxon>Bacillati</taxon>
        <taxon>Cyanobacteriota</taxon>
        <taxon>Cyanophyceae</taxon>
        <taxon>Synechococcales</taxon>
        <taxon>Synechococcaceae</taxon>
        <taxon>Synechococcus</taxon>
    </lineage>
</organism>
<comment type="function">
    <text evidence="1">Catalyzes the ATP-dependent phosphorylation of L-homoserine to L-homoserine phosphate.</text>
</comment>
<comment type="catalytic activity">
    <reaction evidence="1">
        <text>L-homoserine + ATP = O-phospho-L-homoserine + ADP + H(+)</text>
        <dbReference type="Rhea" id="RHEA:13985"/>
        <dbReference type="ChEBI" id="CHEBI:15378"/>
        <dbReference type="ChEBI" id="CHEBI:30616"/>
        <dbReference type="ChEBI" id="CHEBI:57476"/>
        <dbReference type="ChEBI" id="CHEBI:57590"/>
        <dbReference type="ChEBI" id="CHEBI:456216"/>
        <dbReference type="EC" id="2.7.1.39"/>
    </reaction>
</comment>
<comment type="pathway">
    <text evidence="1">Amino-acid biosynthesis; L-threonine biosynthesis; L-threonine from L-aspartate: step 4/5.</text>
</comment>
<comment type="subcellular location">
    <subcellularLocation>
        <location evidence="1">Cytoplasm</location>
    </subcellularLocation>
</comment>
<comment type="similarity">
    <text evidence="1">Belongs to the GHMP kinase family. Homoserine kinase subfamily.</text>
</comment>
<proteinExistence type="inferred from homology"/>
<keyword id="KW-0028">Amino-acid biosynthesis</keyword>
<keyword id="KW-0067">ATP-binding</keyword>
<keyword id="KW-0963">Cytoplasm</keyword>
<keyword id="KW-0418">Kinase</keyword>
<keyword id="KW-0547">Nucleotide-binding</keyword>
<keyword id="KW-0791">Threonine biosynthesis</keyword>
<keyword id="KW-0808">Transferase</keyword>